<sequence length="262" mass="31036">MDHNKLYQLLIDDKFFDVVVELTDEEDVLSINAHKIILCASCEYFEKLFTLFREKNQSKITIKVPNRYVVRDIIIGFYKKNIQPCINNWKYQLDLVVCRDFLGLKINSDMIKNVIVPLEGFELLIKVIDLIGFFDETIGIIIRNIPKDYDKSILSDELLDKITNRTEVLNKNMSETESTIQFIVNSSKYQYIKLEMSHKIKYIQEFLEFMCKYDVWDNKDKFLLTVKPIDYKCPCPTKYSDVSFMIKFFTIYLEAKKVNLTN</sequence>
<keyword id="KW-1185">Reference proteome</keyword>
<organismHost>
    <name type="scientific">Acanthamoeba polyphaga</name>
    <name type="common">Amoeba</name>
    <dbReference type="NCBI Taxonomy" id="5757"/>
</organismHost>
<protein>
    <recommendedName>
        <fullName>Putative BTB/POZ domain-containing protein L834</fullName>
    </recommendedName>
</protein>
<name>YL834_MIMIV</name>
<proteinExistence type="inferred from homology"/>
<reference key="1">
    <citation type="journal article" date="2004" name="Science">
        <title>The 1.2-megabase genome sequence of Mimivirus.</title>
        <authorList>
            <person name="Raoult D."/>
            <person name="Audic S."/>
            <person name="Robert C."/>
            <person name="Abergel C."/>
            <person name="Renesto P."/>
            <person name="Ogata H."/>
            <person name="La Scola B."/>
            <person name="Susan M."/>
            <person name="Claverie J.-M."/>
        </authorList>
    </citation>
    <scope>NUCLEOTIDE SEQUENCE [LARGE SCALE GENOMIC DNA]</scope>
    <source>
        <strain>Rowbotham-Bradford</strain>
    </source>
</reference>
<dbReference type="EMBL" id="AY653733">
    <property type="protein sequence ID" value="AAV51092.1"/>
    <property type="molecule type" value="Genomic_DNA"/>
</dbReference>
<dbReference type="SMR" id="Q5UQJ1"/>
<dbReference type="KEGG" id="vg:9925497"/>
<dbReference type="OrthoDB" id="7868at10239"/>
<dbReference type="Proteomes" id="UP000001134">
    <property type="component" value="Genome"/>
</dbReference>
<dbReference type="CDD" id="cd18186">
    <property type="entry name" value="BTB_POZ_ZBTB_KLHL-like"/>
    <property type="match status" value="1"/>
</dbReference>
<dbReference type="Gene3D" id="3.30.710.10">
    <property type="entry name" value="Potassium Channel Kv1.1, Chain A"/>
    <property type="match status" value="1"/>
</dbReference>
<dbReference type="InterPro" id="IPR000210">
    <property type="entry name" value="BTB/POZ_dom"/>
</dbReference>
<dbReference type="InterPro" id="IPR011333">
    <property type="entry name" value="SKP1/BTB/POZ_sf"/>
</dbReference>
<dbReference type="Pfam" id="PF00651">
    <property type="entry name" value="BTB"/>
    <property type="match status" value="1"/>
</dbReference>
<dbReference type="SUPFAM" id="SSF54695">
    <property type="entry name" value="POZ domain"/>
    <property type="match status" value="1"/>
</dbReference>
<dbReference type="PROSITE" id="PS50097">
    <property type="entry name" value="BTB"/>
    <property type="match status" value="1"/>
</dbReference>
<organism>
    <name type="scientific">Acanthamoeba polyphaga mimivirus</name>
    <name type="common">APMV</name>
    <dbReference type="NCBI Taxonomy" id="212035"/>
    <lineage>
        <taxon>Viruses</taxon>
        <taxon>Varidnaviria</taxon>
        <taxon>Bamfordvirae</taxon>
        <taxon>Nucleocytoviricota</taxon>
        <taxon>Megaviricetes</taxon>
        <taxon>Imitervirales</taxon>
        <taxon>Mimiviridae</taxon>
        <taxon>Megamimivirinae</taxon>
        <taxon>Mimivirus</taxon>
        <taxon>Mimivirus bradfordmassiliense</taxon>
    </lineage>
</organism>
<evidence type="ECO:0000255" key="1">
    <source>
        <dbReference type="PROSITE-ProRule" id="PRU00037"/>
    </source>
</evidence>
<evidence type="ECO:0000305" key="2"/>
<comment type="similarity">
    <text evidence="2">Belongs to the mimivirus BTB/WD family.</text>
</comment>
<feature type="chain" id="PRO_0000186238" description="Putative BTB/POZ domain-containing protein L834">
    <location>
        <begin position="1"/>
        <end position="262"/>
    </location>
</feature>
<feature type="domain" description="BTB" evidence="1">
    <location>
        <begin position="16"/>
        <end position="86"/>
    </location>
</feature>
<gene>
    <name type="ordered locus">MIMI_L834</name>
</gene>
<accession>Q5UQJ1</accession>